<name>RECR_STRP4</name>
<sequence>MLYPTPIAKLIDSYSKLPGIGIKTATRLAFYTIGMSADDVNEFAKNLLSAKRELTYCSICGRLTDDDPCSICTDPTRDQTTILVLEDSRDVAAMENIQEYHGLYHVLHGLISPMNGISPDDINLKSLMTRLMDSEVSEVIVATNATADGEATSMYLSRLLKPAGIKVTRLARGLAVGADIEYADEVTLLRAIENRTEL</sequence>
<protein>
    <recommendedName>
        <fullName evidence="1">Recombination protein RecR</fullName>
    </recommendedName>
</protein>
<accession>B5E722</accession>
<accession>P0A453</accession>
<accession>Q9ZHC4</accession>
<proteinExistence type="inferred from homology"/>
<feature type="chain" id="PRO_1000089773" description="Recombination protein RecR">
    <location>
        <begin position="1"/>
        <end position="198"/>
    </location>
</feature>
<feature type="domain" description="Toprim" evidence="1">
    <location>
        <begin position="80"/>
        <end position="175"/>
    </location>
</feature>
<feature type="zinc finger region" description="C4-type" evidence="1">
    <location>
        <begin position="57"/>
        <end position="72"/>
    </location>
</feature>
<reference key="1">
    <citation type="journal article" date="1998" name="Microbiology">
        <title>Unconventional organization of the division and cell wall gene cluster of Streptococcus pneumoniae.</title>
        <authorList>
            <person name="Massidda O."/>
            <person name="Anderluzzi D."/>
            <person name="Friedli L."/>
            <person name="Feger G."/>
        </authorList>
    </citation>
    <scope>NUCLEOTIDE SEQUENCE [GENOMIC DNA]</scope>
</reference>
<reference key="2">
    <citation type="journal article" date="2001" name="Microb. Drug Resist.">
        <title>Annotated draft genomic sequence from a Streptococcus pneumoniae type 19F clinical isolate.</title>
        <authorList>
            <person name="Dopazo J."/>
            <person name="Mendoza A."/>
            <person name="Herrero J."/>
            <person name="Caldara F."/>
            <person name="Humbert Y."/>
            <person name="Friedli L."/>
            <person name="Guerrier M."/>
            <person name="Grand-Schenk E."/>
            <person name="Gandin C."/>
            <person name="de Francesco M."/>
            <person name="Polissi A."/>
            <person name="Buell G."/>
            <person name="Feger G."/>
            <person name="Garcia E."/>
            <person name="Peitsch M."/>
            <person name="Garcia-Bustos J.F."/>
        </authorList>
    </citation>
    <scope>NUCLEOTIDE SEQUENCE [LARGE SCALE GENOMIC DNA]</scope>
    <source>
        <strain>G54</strain>
    </source>
</reference>
<reference key="3">
    <citation type="submission" date="2008-03" db="EMBL/GenBank/DDBJ databases">
        <title>Pneumococcal beta glucoside metabolism investigated by whole genome comparison.</title>
        <authorList>
            <person name="Mulas L."/>
            <person name="Trappetti C."/>
            <person name="Hakenbeck R."/>
            <person name="Iannelli F."/>
            <person name="Pozzi G."/>
            <person name="Davidsen T.M."/>
            <person name="Tettelin H."/>
            <person name="Oggioni M."/>
        </authorList>
    </citation>
    <scope>NUCLEOTIDE SEQUENCE [LARGE SCALE GENOMIC DNA]</scope>
    <source>
        <strain>G54</strain>
    </source>
</reference>
<gene>
    <name evidence="1" type="primary">recR</name>
    <name type="ordered locus">SPG_1581</name>
</gene>
<keyword id="KW-0227">DNA damage</keyword>
<keyword id="KW-0233">DNA recombination</keyword>
<keyword id="KW-0234">DNA repair</keyword>
<keyword id="KW-0479">Metal-binding</keyword>
<keyword id="KW-0862">Zinc</keyword>
<keyword id="KW-0863">Zinc-finger</keyword>
<comment type="function">
    <text evidence="1">May play a role in DNA repair. It seems to be involved in an RecBC-independent recombinational process of DNA repair. It may act with RecF and RecO.</text>
</comment>
<comment type="similarity">
    <text evidence="1">Belongs to the RecR family.</text>
</comment>
<evidence type="ECO:0000255" key="1">
    <source>
        <dbReference type="HAMAP-Rule" id="MF_00017"/>
    </source>
</evidence>
<dbReference type="EMBL" id="AF068901">
    <property type="protein sequence ID" value="AAC95434.1"/>
    <property type="molecule type" value="Genomic_DNA"/>
</dbReference>
<dbReference type="EMBL" id="CP001015">
    <property type="protein sequence ID" value="ACF56269.1"/>
    <property type="molecule type" value="Genomic_DNA"/>
</dbReference>
<dbReference type="SMR" id="B5E722"/>
<dbReference type="KEGG" id="spx:SPG_1581"/>
<dbReference type="HOGENOM" id="CLU_060739_1_0_9"/>
<dbReference type="GO" id="GO:0003677">
    <property type="term" value="F:DNA binding"/>
    <property type="evidence" value="ECO:0007669"/>
    <property type="project" value="UniProtKB-UniRule"/>
</dbReference>
<dbReference type="GO" id="GO:0008270">
    <property type="term" value="F:zinc ion binding"/>
    <property type="evidence" value="ECO:0007669"/>
    <property type="project" value="UniProtKB-KW"/>
</dbReference>
<dbReference type="GO" id="GO:0006310">
    <property type="term" value="P:DNA recombination"/>
    <property type="evidence" value="ECO:0007669"/>
    <property type="project" value="UniProtKB-UniRule"/>
</dbReference>
<dbReference type="GO" id="GO:0006281">
    <property type="term" value="P:DNA repair"/>
    <property type="evidence" value="ECO:0007669"/>
    <property type="project" value="UniProtKB-UniRule"/>
</dbReference>
<dbReference type="CDD" id="cd01025">
    <property type="entry name" value="TOPRIM_recR"/>
    <property type="match status" value="1"/>
</dbReference>
<dbReference type="Gene3D" id="3.30.60.80">
    <property type="match status" value="1"/>
</dbReference>
<dbReference type="Gene3D" id="3.40.1360.10">
    <property type="match status" value="1"/>
</dbReference>
<dbReference type="Gene3D" id="6.10.250.240">
    <property type="match status" value="1"/>
</dbReference>
<dbReference type="Gene3D" id="1.10.8.420">
    <property type="entry name" value="RecR Domain 1"/>
    <property type="match status" value="1"/>
</dbReference>
<dbReference type="HAMAP" id="MF_00017">
    <property type="entry name" value="RecR"/>
    <property type="match status" value="1"/>
</dbReference>
<dbReference type="InterPro" id="IPR000093">
    <property type="entry name" value="DNA_Rcmb_RecR"/>
</dbReference>
<dbReference type="InterPro" id="IPR023627">
    <property type="entry name" value="Rcmb_RecR"/>
</dbReference>
<dbReference type="InterPro" id="IPR015967">
    <property type="entry name" value="Rcmb_RecR_Znf"/>
</dbReference>
<dbReference type="InterPro" id="IPR006171">
    <property type="entry name" value="TOPRIM_dom"/>
</dbReference>
<dbReference type="InterPro" id="IPR034137">
    <property type="entry name" value="TOPRIM_RecR"/>
</dbReference>
<dbReference type="NCBIfam" id="TIGR00615">
    <property type="entry name" value="recR"/>
    <property type="match status" value="1"/>
</dbReference>
<dbReference type="PANTHER" id="PTHR30446">
    <property type="entry name" value="RECOMBINATION PROTEIN RECR"/>
    <property type="match status" value="1"/>
</dbReference>
<dbReference type="PANTHER" id="PTHR30446:SF0">
    <property type="entry name" value="RECOMBINATION PROTEIN RECR"/>
    <property type="match status" value="1"/>
</dbReference>
<dbReference type="Pfam" id="PF21175">
    <property type="entry name" value="RecR_C"/>
    <property type="match status" value="1"/>
</dbReference>
<dbReference type="Pfam" id="PF21176">
    <property type="entry name" value="RecR_HhH"/>
    <property type="match status" value="1"/>
</dbReference>
<dbReference type="Pfam" id="PF02132">
    <property type="entry name" value="RecR_ZnF"/>
    <property type="match status" value="1"/>
</dbReference>
<dbReference type="Pfam" id="PF13662">
    <property type="entry name" value="Toprim_4"/>
    <property type="match status" value="1"/>
</dbReference>
<dbReference type="SMART" id="SM00493">
    <property type="entry name" value="TOPRIM"/>
    <property type="match status" value="1"/>
</dbReference>
<dbReference type="SUPFAM" id="SSF111304">
    <property type="entry name" value="Recombination protein RecR"/>
    <property type="match status" value="1"/>
</dbReference>
<dbReference type="PROSITE" id="PS01300">
    <property type="entry name" value="RECR"/>
    <property type="match status" value="1"/>
</dbReference>
<dbReference type="PROSITE" id="PS50880">
    <property type="entry name" value="TOPRIM"/>
    <property type="match status" value="1"/>
</dbReference>
<organism>
    <name type="scientific">Streptococcus pneumoniae serotype 19F (strain G54)</name>
    <dbReference type="NCBI Taxonomy" id="512566"/>
    <lineage>
        <taxon>Bacteria</taxon>
        <taxon>Bacillati</taxon>
        <taxon>Bacillota</taxon>
        <taxon>Bacilli</taxon>
        <taxon>Lactobacillales</taxon>
        <taxon>Streptococcaceae</taxon>
        <taxon>Streptococcus</taxon>
    </lineage>
</organism>